<dbReference type="EMBL" id="AF050103">
    <property type="protein sequence ID" value="AAC05214.1"/>
    <property type="molecule type" value="Genomic_DNA"/>
</dbReference>
<dbReference type="RefSeq" id="WP_003541639.1">
    <property type="nucleotide sequence ID" value="NZ_WIEO01000031.1"/>
</dbReference>
<dbReference type="SMR" id="O68546"/>
<dbReference type="GeneID" id="61424920"/>
<dbReference type="OMA" id="TWLTQEA"/>
<dbReference type="GO" id="GO:0003677">
    <property type="term" value="F:DNA binding"/>
    <property type="evidence" value="ECO:0007669"/>
    <property type="project" value="UniProtKB-UniRule"/>
</dbReference>
<dbReference type="GO" id="GO:0070063">
    <property type="term" value="F:RNA polymerase binding"/>
    <property type="evidence" value="ECO:0007669"/>
    <property type="project" value="InterPro"/>
</dbReference>
<dbReference type="GO" id="GO:0006354">
    <property type="term" value="P:DNA-templated transcription elongation"/>
    <property type="evidence" value="ECO:0007669"/>
    <property type="project" value="TreeGrafter"/>
</dbReference>
<dbReference type="GO" id="GO:0032784">
    <property type="term" value="P:regulation of DNA-templated transcription elongation"/>
    <property type="evidence" value="ECO:0007669"/>
    <property type="project" value="UniProtKB-UniRule"/>
</dbReference>
<dbReference type="FunFam" id="1.10.287.180:FF:000001">
    <property type="entry name" value="Transcription elongation factor GreA"/>
    <property type="match status" value="1"/>
</dbReference>
<dbReference type="FunFam" id="3.10.50.30:FF:000001">
    <property type="entry name" value="Transcription elongation factor GreA"/>
    <property type="match status" value="1"/>
</dbReference>
<dbReference type="Gene3D" id="3.10.50.30">
    <property type="entry name" value="Transcription elongation factor, GreA/GreB, C-terminal domain"/>
    <property type="match status" value="1"/>
</dbReference>
<dbReference type="Gene3D" id="1.10.287.180">
    <property type="entry name" value="Transcription elongation factor, GreA/GreB, N-terminal domain"/>
    <property type="match status" value="1"/>
</dbReference>
<dbReference type="HAMAP" id="MF_00105">
    <property type="entry name" value="GreA_GreB"/>
    <property type="match status" value="1"/>
</dbReference>
<dbReference type="InterPro" id="IPR036953">
    <property type="entry name" value="GreA/GreB_C_sf"/>
</dbReference>
<dbReference type="InterPro" id="IPR018151">
    <property type="entry name" value="TF_GreA/GreB_CS"/>
</dbReference>
<dbReference type="InterPro" id="IPR006359">
    <property type="entry name" value="Tscrpt_elong_fac_GreA"/>
</dbReference>
<dbReference type="InterPro" id="IPR028624">
    <property type="entry name" value="Tscrpt_elong_fac_GreA/B"/>
</dbReference>
<dbReference type="InterPro" id="IPR001437">
    <property type="entry name" value="Tscrpt_elong_fac_GreA/B_C"/>
</dbReference>
<dbReference type="InterPro" id="IPR023459">
    <property type="entry name" value="Tscrpt_elong_fac_GreA/B_fam"/>
</dbReference>
<dbReference type="InterPro" id="IPR022691">
    <property type="entry name" value="Tscrpt_elong_fac_GreA/B_N"/>
</dbReference>
<dbReference type="InterPro" id="IPR036805">
    <property type="entry name" value="Tscrpt_elong_fac_GreA/B_N_sf"/>
</dbReference>
<dbReference type="NCBIfam" id="TIGR01462">
    <property type="entry name" value="greA"/>
    <property type="match status" value="1"/>
</dbReference>
<dbReference type="NCBIfam" id="NF001261">
    <property type="entry name" value="PRK00226.1-2"/>
    <property type="match status" value="1"/>
</dbReference>
<dbReference type="NCBIfam" id="NF001263">
    <property type="entry name" value="PRK00226.1-4"/>
    <property type="match status" value="1"/>
</dbReference>
<dbReference type="NCBIfam" id="NF001264">
    <property type="entry name" value="PRK00226.1-5"/>
    <property type="match status" value="1"/>
</dbReference>
<dbReference type="PANTHER" id="PTHR30437">
    <property type="entry name" value="TRANSCRIPTION ELONGATION FACTOR GREA"/>
    <property type="match status" value="1"/>
</dbReference>
<dbReference type="PANTHER" id="PTHR30437:SF4">
    <property type="entry name" value="TRANSCRIPTION ELONGATION FACTOR GREA"/>
    <property type="match status" value="1"/>
</dbReference>
<dbReference type="Pfam" id="PF01272">
    <property type="entry name" value="GreA_GreB"/>
    <property type="match status" value="1"/>
</dbReference>
<dbReference type="Pfam" id="PF03449">
    <property type="entry name" value="GreA_GreB_N"/>
    <property type="match status" value="1"/>
</dbReference>
<dbReference type="PIRSF" id="PIRSF006092">
    <property type="entry name" value="GreA_GreB"/>
    <property type="match status" value="1"/>
</dbReference>
<dbReference type="SUPFAM" id="SSF54534">
    <property type="entry name" value="FKBP-like"/>
    <property type="match status" value="1"/>
</dbReference>
<dbReference type="SUPFAM" id="SSF46557">
    <property type="entry name" value="GreA transcript cleavage protein, N-terminal domain"/>
    <property type="match status" value="1"/>
</dbReference>
<dbReference type="PROSITE" id="PS00829">
    <property type="entry name" value="GREAB_1"/>
    <property type="match status" value="1"/>
</dbReference>
<dbReference type="PROSITE" id="PS00830">
    <property type="entry name" value="GREAB_2"/>
    <property type="match status" value="1"/>
</dbReference>
<organism>
    <name type="scientific">Rhizobium leguminosarum bv. viciae</name>
    <dbReference type="NCBI Taxonomy" id="387"/>
    <lineage>
        <taxon>Bacteria</taxon>
        <taxon>Pseudomonadati</taxon>
        <taxon>Pseudomonadota</taxon>
        <taxon>Alphaproteobacteria</taxon>
        <taxon>Hyphomicrobiales</taxon>
        <taxon>Rhizobiaceae</taxon>
        <taxon>Rhizobium/Agrobacterium group</taxon>
        <taxon>Rhizobium</taxon>
    </lineage>
</organism>
<accession>O68546</accession>
<protein>
    <recommendedName>
        <fullName evidence="1">Transcription elongation factor GreA</fullName>
    </recommendedName>
    <alternativeName>
        <fullName evidence="1">Transcript cleavage factor GreA</fullName>
    </alternativeName>
</protein>
<sequence>MVEKVPMTPGGFVKLQEELRWRQQEERPRIIEAIAEARAHGDLSENAEYHAAKEAQSHNEGRISELEDLTARAEVIDLTKMSGDKIKFGAKVKLIDEDTEEEKTYQIVGDQEADVKAGRISISSPIARALIGKEVGDSIEVNAPGGSKAYEILQVSWG</sequence>
<evidence type="ECO:0000255" key="1">
    <source>
        <dbReference type="HAMAP-Rule" id="MF_00105"/>
    </source>
</evidence>
<name>GREA_RHILV</name>
<comment type="function">
    <text evidence="1">Necessary for efficient RNA polymerase transcription elongation past template-encoded arresting sites. The arresting sites in DNA have the property of trapping a certain fraction of elongating RNA polymerases that pass through, resulting in locked ternary complexes. Cleavage of the nascent transcript by cleavage factors such as GreA or GreB allows the resumption of elongation from the new 3'terminus. GreA releases sequences of 2 to 3 nucleotides.</text>
</comment>
<comment type="similarity">
    <text evidence="1">Belongs to the GreA/GreB family.</text>
</comment>
<proteinExistence type="inferred from homology"/>
<keyword id="KW-0238">DNA-binding</keyword>
<keyword id="KW-0804">Transcription</keyword>
<keyword id="KW-0805">Transcription regulation</keyword>
<feature type="chain" id="PRO_0000176960" description="Transcription elongation factor GreA">
    <location>
        <begin position="1"/>
        <end position="158"/>
    </location>
</feature>
<reference key="1">
    <citation type="journal article" date="1998" name="J. Biol. Chem.">
        <title>Cloning and overexpression of glycosyltransferases that generate the lipopolysaccharide core of Rhizobium leguminosarum.</title>
        <authorList>
            <person name="Kadrmas J.L."/>
            <person name="Allaway D."/>
            <person name="Studholme R.E."/>
            <person name="Sullivan J.T."/>
            <person name="Ronson C.W."/>
            <person name="Poole P.S."/>
            <person name="Raetz C.R.H."/>
        </authorList>
    </citation>
    <scope>NUCLEOTIDE SEQUENCE [GENOMIC DNA]</scope>
    <source>
        <strain>3855</strain>
    </source>
</reference>
<gene>
    <name evidence="1" type="primary">greA</name>
</gene>